<protein>
    <recommendedName>
        <fullName evidence="1">Large ribosomal subunit protein uL4</fullName>
    </recommendedName>
    <alternativeName>
        <fullName evidence="3">50S ribosomal protein L4</fullName>
    </alternativeName>
</protein>
<evidence type="ECO:0000255" key="1">
    <source>
        <dbReference type="HAMAP-Rule" id="MF_01328"/>
    </source>
</evidence>
<evidence type="ECO:0000256" key="2">
    <source>
        <dbReference type="SAM" id="MobiDB-lite"/>
    </source>
</evidence>
<evidence type="ECO:0000305" key="3"/>
<name>RL4_SALNS</name>
<gene>
    <name evidence="1" type="primary">rplD</name>
    <name type="ordered locus">SNSL254_A3708</name>
</gene>
<comment type="function">
    <text evidence="1">One of the primary rRNA binding proteins, this protein initially binds near the 5'-end of the 23S rRNA. It is important during the early stages of 50S assembly. It makes multiple contacts with different domains of the 23S rRNA in the assembled 50S subunit and ribosome.</text>
</comment>
<comment type="function">
    <text evidence="1">Forms part of the polypeptide exit tunnel.</text>
</comment>
<comment type="subunit">
    <text evidence="1">Part of the 50S ribosomal subunit.</text>
</comment>
<comment type="similarity">
    <text evidence="1">Belongs to the universal ribosomal protein uL4 family.</text>
</comment>
<sequence>MELVLKDAQSALTVSETTFGRDFNEALVHQVVVAYAAGARQGTRAQKTRAEVTGSGKKPWRQKGTGRARSGSIKSPIWRSGGVTFAARPQDHSQKVNKKMYRGALKSILSELVRQDRLIVVEKFSVEAPKTKLLAQKLKDMALEDVLIITGELDENLFLAARNLHKVDVRDATGIDPVSLIAFDKVVMTADAVKQVEEMLA</sequence>
<reference key="1">
    <citation type="journal article" date="2011" name="J. Bacteriol.">
        <title>Comparative genomics of 28 Salmonella enterica isolates: evidence for CRISPR-mediated adaptive sublineage evolution.</title>
        <authorList>
            <person name="Fricke W.F."/>
            <person name="Mammel M.K."/>
            <person name="McDermott P.F."/>
            <person name="Tartera C."/>
            <person name="White D.G."/>
            <person name="Leclerc J.E."/>
            <person name="Ravel J."/>
            <person name="Cebula T.A."/>
        </authorList>
    </citation>
    <scope>NUCLEOTIDE SEQUENCE [LARGE SCALE GENOMIC DNA]</scope>
    <source>
        <strain>SL254</strain>
    </source>
</reference>
<proteinExistence type="inferred from homology"/>
<organism>
    <name type="scientific">Salmonella newport (strain SL254)</name>
    <dbReference type="NCBI Taxonomy" id="423368"/>
    <lineage>
        <taxon>Bacteria</taxon>
        <taxon>Pseudomonadati</taxon>
        <taxon>Pseudomonadota</taxon>
        <taxon>Gammaproteobacteria</taxon>
        <taxon>Enterobacterales</taxon>
        <taxon>Enterobacteriaceae</taxon>
        <taxon>Salmonella</taxon>
    </lineage>
</organism>
<dbReference type="EMBL" id="CP001113">
    <property type="protein sequence ID" value="ACF64711.1"/>
    <property type="molecule type" value="Genomic_DNA"/>
</dbReference>
<dbReference type="RefSeq" id="WP_000424395.1">
    <property type="nucleotide sequence ID" value="NZ_CCMR01000003.1"/>
</dbReference>
<dbReference type="SMR" id="B4SUT9"/>
<dbReference type="GeneID" id="97442859"/>
<dbReference type="KEGG" id="see:SNSL254_A3708"/>
<dbReference type="HOGENOM" id="CLU_041575_5_2_6"/>
<dbReference type="Proteomes" id="UP000008824">
    <property type="component" value="Chromosome"/>
</dbReference>
<dbReference type="GO" id="GO:1990904">
    <property type="term" value="C:ribonucleoprotein complex"/>
    <property type="evidence" value="ECO:0007669"/>
    <property type="project" value="UniProtKB-KW"/>
</dbReference>
<dbReference type="GO" id="GO:0005840">
    <property type="term" value="C:ribosome"/>
    <property type="evidence" value="ECO:0007669"/>
    <property type="project" value="UniProtKB-KW"/>
</dbReference>
<dbReference type="GO" id="GO:0019843">
    <property type="term" value="F:rRNA binding"/>
    <property type="evidence" value="ECO:0007669"/>
    <property type="project" value="UniProtKB-UniRule"/>
</dbReference>
<dbReference type="GO" id="GO:0003735">
    <property type="term" value="F:structural constituent of ribosome"/>
    <property type="evidence" value="ECO:0007669"/>
    <property type="project" value="InterPro"/>
</dbReference>
<dbReference type="GO" id="GO:0006412">
    <property type="term" value="P:translation"/>
    <property type="evidence" value="ECO:0007669"/>
    <property type="project" value="UniProtKB-UniRule"/>
</dbReference>
<dbReference type="FunFam" id="3.40.1370.10:FF:000001">
    <property type="entry name" value="50S ribosomal protein L4"/>
    <property type="match status" value="1"/>
</dbReference>
<dbReference type="Gene3D" id="3.40.1370.10">
    <property type="match status" value="1"/>
</dbReference>
<dbReference type="HAMAP" id="MF_01328_B">
    <property type="entry name" value="Ribosomal_uL4_B"/>
    <property type="match status" value="1"/>
</dbReference>
<dbReference type="InterPro" id="IPR002136">
    <property type="entry name" value="Ribosomal_uL4"/>
</dbReference>
<dbReference type="InterPro" id="IPR013005">
    <property type="entry name" value="Ribosomal_uL4-like"/>
</dbReference>
<dbReference type="InterPro" id="IPR023574">
    <property type="entry name" value="Ribosomal_uL4_dom_sf"/>
</dbReference>
<dbReference type="NCBIfam" id="TIGR03953">
    <property type="entry name" value="rplD_bact"/>
    <property type="match status" value="1"/>
</dbReference>
<dbReference type="PANTHER" id="PTHR10746">
    <property type="entry name" value="50S RIBOSOMAL PROTEIN L4"/>
    <property type="match status" value="1"/>
</dbReference>
<dbReference type="PANTHER" id="PTHR10746:SF6">
    <property type="entry name" value="LARGE RIBOSOMAL SUBUNIT PROTEIN UL4M"/>
    <property type="match status" value="1"/>
</dbReference>
<dbReference type="Pfam" id="PF00573">
    <property type="entry name" value="Ribosomal_L4"/>
    <property type="match status" value="1"/>
</dbReference>
<dbReference type="SUPFAM" id="SSF52166">
    <property type="entry name" value="Ribosomal protein L4"/>
    <property type="match status" value="1"/>
</dbReference>
<accession>B4SUT9</accession>
<keyword id="KW-0687">Ribonucleoprotein</keyword>
<keyword id="KW-0689">Ribosomal protein</keyword>
<keyword id="KW-0694">RNA-binding</keyword>
<keyword id="KW-0699">rRNA-binding</keyword>
<feature type="chain" id="PRO_1000142183" description="Large ribosomal subunit protein uL4">
    <location>
        <begin position="1"/>
        <end position="201"/>
    </location>
</feature>
<feature type="region of interest" description="Disordered" evidence="2">
    <location>
        <begin position="44"/>
        <end position="71"/>
    </location>
</feature>